<sequence length="237" mass="26355">MVISSLSNSQPLNAPVSSSPITQELANNLILTTLNDLYNWARLSSLWPLLYGTSCCFIEFACLIGSRFDFDRFGLVPRSSPRQADLIITAGTVTMKMAPSLVRLYEQMPDPKYVIAMGACTITGGMFSTDSYSTVRGVDKLIPVDVYLPGCPPKPEAIIDAVIKLRKKVAQEQTAERRGIEQIHRYFTLSHRLQPVSPILTGQYLQAETRQAPPRELATGLDTLVPRSLEANYIERF</sequence>
<evidence type="ECO:0000255" key="1">
    <source>
        <dbReference type="HAMAP-Rule" id="MF_01356"/>
    </source>
</evidence>
<comment type="function">
    <text evidence="1">NDH shuttles electrons from NAD(P)H:plastoquinone, via FMN and iron-sulfur (Fe-S) centers, to quinones in the photosynthetic chain and possibly in a chloroplast respiratory chain. The immediate electron acceptor for the enzyme in this species is believed to be plastoquinone. Couples the redox reaction to proton translocation, and thus conserves the redox energy in a proton gradient.</text>
</comment>
<comment type="catalytic activity">
    <reaction evidence="1">
        <text>a plastoquinone + NADH + (n+1) H(+)(in) = a plastoquinol + NAD(+) + n H(+)(out)</text>
        <dbReference type="Rhea" id="RHEA:42608"/>
        <dbReference type="Rhea" id="RHEA-COMP:9561"/>
        <dbReference type="Rhea" id="RHEA-COMP:9562"/>
        <dbReference type="ChEBI" id="CHEBI:15378"/>
        <dbReference type="ChEBI" id="CHEBI:17757"/>
        <dbReference type="ChEBI" id="CHEBI:57540"/>
        <dbReference type="ChEBI" id="CHEBI:57945"/>
        <dbReference type="ChEBI" id="CHEBI:62192"/>
    </reaction>
</comment>
<comment type="catalytic activity">
    <reaction evidence="1">
        <text>a plastoquinone + NADPH + (n+1) H(+)(in) = a plastoquinol + NADP(+) + n H(+)(out)</text>
        <dbReference type="Rhea" id="RHEA:42612"/>
        <dbReference type="Rhea" id="RHEA-COMP:9561"/>
        <dbReference type="Rhea" id="RHEA-COMP:9562"/>
        <dbReference type="ChEBI" id="CHEBI:15378"/>
        <dbReference type="ChEBI" id="CHEBI:17757"/>
        <dbReference type="ChEBI" id="CHEBI:57783"/>
        <dbReference type="ChEBI" id="CHEBI:58349"/>
        <dbReference type="ChEBI" id="CHEBI:62192"/>
    </reaction>
</comment>
<comment type="cofactor">
    <cofactor evidence="1">
        <name>[4Fe-4S] cluster</name>
        <dbReference type="ChEBI" id="CHEBI:49883"/>
    </cofactor>
    <text evidence="1">Binds 1 [4Fe-4S] cluster.</text>
</comment>
<comment type="subunit">
    <text evidence="1">NDH is composed of at least 16 different subunits, 5 of which are encoded in the nucleus.</text>
</comment>
<comment type="subcellular location">
    <subcellularLocation>
        <location evidence="1">Plastid</location>
        <location evidence="1">Chloroplast thylakoid membrane</location>
        <topology evidence="1">Peripheral membrane protein</topology>
        <orientation evidence="1">Stromal side</orientation>
    </subcellularLocation>
</comment>
<comment type="similarity">
    <text evidence="1">Belongs to the complex I 20 kDa subunit family.</text>
</comment>
<accession>Q9TKY0</accession>
<proteinExistence type="inferred from homology"/>
<feature type="chain" id="PRO_0000118749" description="NAD(P)H-quinone oxidoreductase subunit K, chloroplastic">
    <location>
        <begin position="1"/>
        <end position="237"/>
    </location>
</feature>
<feature type="binding site" evidence="1">
    <location>
        <position position="55"/>
    </location>
    <ligand>
        <name>[4Fe-4S] cluster</name>
        <dbReference type="ChEBI" id="CHEBI:49883"/>
    </ligand>
</feature>
<feature type="binding site" evidence="1">
    <location>
        <position position="56"/>
    </location>
    <ligand>
        <name>[4Fe-4S] cluster</name>
        <dbReference type="ChEBI" id="CHEBI:49883"/>
    </ligand>
</feature>
<feature type="binding site" evidence="1">
    <location>
        <position position="120"/>
    </location>
    <ligand>
        <name>[4Fe-4S] cluster</name>
        <dbReference type="ChEBI" id="CHEBI:49883"/>
    </ligand>
</feature>
<feature type="binding site" evidence="1">
    <location>
        <position position="151"/>
    </location>
    <ligand>
        <name>[4Fe-4S] cluster</name>
        <dbReference type="ChEBI" id="CHEBI:49883"/>
    </ligand>
</feature>
<name>NDHK_NEPOL</name>
<dbReference type="EC" id="7.1.1.-" evidence="1"/>
<dbReference type="EMBL" id="AF137379">
    <property type="protein sequence ID" value="AAD54836.1"/>
    <property type="molecule type" value="Genomic_DNA"/>
</dbReference>
<dbReference type="RefSeq" id="NP_050865.1">
    <property type="nucleotide sequence ID" value="NC_000927.1"/>
</dbReference>
<dbReference type="SMR" id="Q9TKY0"/>
<dbReference type="GeneID" id="802047"/>
<dbReference type="GO" id="GO:0009535">
    <property type="term" value="C:chloroplast thylakoid membrane"/>
    <property type="evidence" value="ECO:0007669"/>
    <property type="project" value="UniProtKB-SubCell"/>
</dbReference>
<dbReference type="GO" id="GO:0045271">
    <property type="term" value="C:respiratory chain complex I"/>
    <property type="evidence" value="ECO:0007669"/>
    <property type="project" value="TreeGrafter"/>
</dbReference>
<dbReference type="GO" id="GO:0051539">
    <property type="term" value="F:4 iron, 4 sulfur cluster binding"/>
    <property type="evidence" value="ECO:0007669"/>
    <property type="project" value="UniProtKB-KW"/>
</dbReference>
<dbReference type="GO" id="GO:0005506">
    <property type="term" value="F:iron ion binding"/>
    <property type="evidence" value="ECO:0007669"/>
    <property type="project" value="UniProtKB-UniRule"/>
</dbReference>
<dbReference type="GO" id="GO:0008137">
    <property type="term" value="F:NADH dehydrogenase (ubiquinone) activity"/>
    <property type="evidence" value="ECO:0007669"/>
    <property type="project" value="InterPro"/>
</dbReference>
<dbReference type="GO" id="GO:0048038">
    <property type="term" value="F:quinone binding"/>
    <property type="evidence" value="ECO:0007669"/>
    <property type="project" value="UniProtKB-KW"/>
</dbReference>
<dbReference type="GO" id="GO:0009060">
    <property type="term" value="P:aerobic respiration"/>
    <property type="evidence" value="ECO:0007669"/>
    <property type="project" value="TreeGrafter"/>
</dbReference>
<dbReference type="GO" id="GO:0015990">
    <property type="term" value="P:electron transport coupled proton transport"/>
    <property type="evidence" value="ECO:0007669"/>
    <property type="project" value="TreeGrafter"/>
</dbReference>
<dbReference type="GO" id="GO:0019684">
    <property type="term" value="P:photosynthesis, light reaction"/>
    <property type="evidence" value="ECO:0007669"/>
    <property type="project" value="UniProtKB-UniRule"/>
</dbReference>
<dbReference type="FunFam" id="3.40.50.12280:FF:000003">
    <property type="entry name" value="NAD(P)H-quinone oxidoreductase subunit K, chloroplastic"/>
    <property type="match status" value="1"/>
</dbReference>
<dbReference type="Gene3D" id="3.40.50.12280">
    <property type="match status" value="1"/>
</dbReference>
<dbReference type="HAMAP" id="MF_01356">
    <property type="entry name" value="NDH1_NuoB"/>
    <property type="match status" value="1"/>
</dbReference>
<dbReference type="InterPro" id="IPR006137">
    <property type="entry name" value="NADH_UbQ_OxRdtase-like_20kDa"/>
</dbReference>
<dbReference type="InterPro" id="IPR006138">
    <property type="entry name" value="NADH_UQ_OxRdtase_20Kd_su"/>
</dbReference>
<dbReference type="NCBIfam" id="TIGR01957">
    <property type="entry name" value="nuoB_fam"/>
    <property type="match status" value="1"/>
</dbReference>
<dbReference type="NCBIfam" id="NF005012">
    <property type="entry name" value="PRK06411.1"/>
    <property type="match status" value="1"/>
</dbReference>
<dbReference type="PANTHER" id="PTHR11995">
    <property type="entry name" value="NADH DEHYDROGENASE"/>
    <property type="match status" value="1"/>
</dbReference>
<dbReference type="PANTHER" id="PTHR11995:SF14">
    <property type="entry name" value="NADH DEHYDROGENASE [UBIQUINONE] IRON-SULFUR PROTEIN 7, MITOCHONDRIAL"/>
    <property type="match status" value="1"/>
</dbReference>
<dbReference type="Pfam" id="PF01058">
    <property type="entry name" value="Oxidored_q6"/>
    <property type="match status" value="1"/>
</dbReference>
<dbReference type="SUPFAM" id="SSF56770">
    <property type="entry name" value="HydA/Nqo6-like"/>
    <property type="match status" value="1"/>
</dbReference>
<dbReference type="PROSITE" id="PS01150">
    <property type="entry name" value="COMPLEX1_20K"/>
    <property type="match status" value="1"/>
</dbReference>
<protein>
    <recommendedName>
        <fullName evidence="1">NAD(P)H-quinone oxidoreductase subunit K, chloroplastic</fullName>
        <ecNumber evidence="1">7.1.1.-</ecNumber>
    </recommendedName>
    <alternativeName>
        <fullName evidence="1">NAD(P)H dehydrogenase subunit K</fullName>
    </alternativeName>
    <alternativeName>
        <fullName evidence="1">NADH-plastoquinone oxidoreductase subunit K</fullName>
    </alternativeName>
</protein>
<organism>
    <name type="scientific">Nephroselmis olivacea</name>
    <name type="common">Green alga</name>
    <dbReference type="NCBI Taxonomy" id="31312"/>
    <lineage>
        <taxon>Eukaryota</taxon>
        <taxon>Viridiplantae</taxon>
        <taxon>Chlorophyta</taxon>
        <taxon>Nephroselmidophyceae</taxon>
        <taxon>Nephroselmidales</taxon>
        <taxon>Nephroselmidaceae</taxon>
        <taxon>Nephroselmis</taxon>
    </lineage>
</organism>
<keyword id="KW-0004">4Fe-4S</keyword>
<keyword id="KW-0150">Chloroplast</keyword>
<keyword id="KW-0408">Iron</keyword>
<keyword id="KW-0411">Iron-sulfur</keyword>
<keyword id="KW-0472">Membrane</keyword>
<keyword id="KW-0479">Metal-binding</keyword>
<keyword id="KW-0520">NAD</keyword>
<keyword id="KW-0521">NADP</keyword>
<keyword id="KW-0934">Plastid</keyword>
<keyword id="KW-0618">Plastoquinone</keyword>
<keyword id="KW-0874">Quinone</keyword>
<keyword id="KW-0793">Thylakoid</keyword>
<keyword id="KW-1278">Translocase</keyword>
<keyword id="KW-0813">Transport</keyword>
<geneLocation type="chloroplast"/>
<reference key="1">
    <citation type="journal article" date="1999" name="Proc. Natl. Acad. Sci. U.S.A.">
        <title>The complete chloroplast DNA sequence of the green alga Nephroselmis olivacea: insights into the architecture of ancestral chloroplast genomes.</title>
        <authorList>
            <person name="Turmel M."/>
            <person name="Otis C."/>
            <person name="Lemieux C."/>
        </authorList>
    </citation>
    <scope>NUCLEOTIDE SEQUENCE [LARGE SCALE GENOMIC DNA]</scope>
    <source>
        <strain>NIES-484 / S-N-5-8</strain>
    </source>
</reference>
<gene>
    <name evidence="1" type="primary">ndhK</name>
</gene>